<keyword id="KW-0012">Acyltransferase</keyword>
<keyword id="KW-0489">Methyltransferase</keyword>
<keyword id="KW-0511">Multifunctional enzyme</keyword>
<keyword id="KW-0521">NADP</keyword>
<keyword id="KW-0596">Phosphopantetheine</keyword>
<keyword id="KW-0597">Phosphoprotein</keyword>
<keyword id="KW-0808">Transferase</keyword>
<evidence type="ECO:0000250" key="1">
    <source>
        <dbReference type="UniProtKB" id="A0A0K0MCJ4"/>
    </source>
</evidence>
<evidence type="ECO:0000255" key="2"/>
<evidence type="ECO:0000255" key="3">
    <source>
        <dbReference type="PROSITE-ProRule" id="PRU00258"/>
    </source>
</evidence>
<evidence type="ECO:0000255" key="4">
    <source>
        <dbReference type="PROSITE-ProRule" id="PRU01348"/>
    </source>
</evidence>
<evidence type="ECO:0000255" key="5">
    <source>
        <dbReference type="PROSITE-ProRule" id="PRU01363"/>
    </source>
</evidence>
<evidence type="ECO:0000256" key="6">
    <source>
        <dbReference type="SAM" id="MobiDB-lite"/>
    </source>
</evidence>
<evidence type="ECO:0000269" key="7">
    <source>
    </source>
</evidence>
<evidence type="ECO:0000303" key="8">
    <source>
    </source>
</evidence>
<evidence type="ECO:0000305" key="9">
    <source>
    </source>
</evidence>
<dbReference type="EC" id="2.3.1.-" evidence="7"/>
<dbReference type="EMBL" id="ACJE01000001">
    <property type="protein sequence ID" value="EHA28237.1"/>
    <property type="molecule type" value="Genomic_DNA"/>
</dbReference>
<dbReference type="SMR" id="G3XMC4"/>
<dbReference type="STRING" id="380704.G3XMC4"/>
<dbReference type="VEuPathDB" id="FungiDB:ASPNIDRAFT2_1080089"/>
<dbReference type="HOGENOM" id="CLU_000022_6_2_1"/>
<dbReference type="OrthoDB" id="52430at5052"/>
<dbReference type="Proteomes" id="UP000009038">
    <property type="component" value="Unassembled WGS sequence"/>
</dbReference>
<dbReference type="GO" id="GO:0016746">
    <property type="term" value="F:acyltransferase activity"/>
    <property type="evidence" value="ECO:0007669"/>
    <property type="project" value="UniProtKB-KW"/>
</dbReference>
<dbReference type="GO" id="GO:0008168">
    <property type="term" value="F:methyltransferase activity"/>
    <property type="evidence" value="ECO:0007669"/>
    <property type="project" value="UniProtKB-KW"/>
</dbReference>
<dbReference type="GO" id="GO:0031177">
    <property type="term" value="F:phosphopantetheine binding"/>
    <property type="evidence" value="ECO:0007669"/>
    <property type="project" value="InterPro"/>
</dbReference>
<dbReference type="GO" id="GO:0009058">
    <property type="term" value="P:biosynthetic process"/>
    <property type="evidence" value="ECO:0007669"/>
    <property type="project" value="UniProtKB-ARBA"/>
</dbReference>
<dbReference type="GO" id="GO:0032259">
    <property type="term" value="P:methylation"/>
    <property type="evidence" value="ECO:0007669"/>
    <property type="project" value="UniProtKB-KW"/>
</dbReference>
<dbReference type="CDD" id="cd00833">
    <property type="entry name" value="PKS"/>
    <property type="match status" value="1"/>
</dbReference>
<dbReference type="Gene3D" id="3.30.70.3290">
    <property type="match status" value="1"/>
</dbReference>
<dbReference type="Gene3D" id="3.40.47.10">
    <property type="match status" value="1"/>
</dbReference>
<dbReference type="Gene3D" id="1.10.1200.10">
    <property type="entry name" value="ACP-like"/>
    <property type="match status" value="1"/>
</dbReference>
<dbReference type="Gene3D" id="3.40.366.10">
    <property type="entry name" value="Malonyl-Coenzyme A Acyl Carrier Protein, domain 2"/>
    <property type="match status" value="2"/>
</dbReference>
<dbReference type="Gene3D" id="3.40.50.720">
    <property type="entry name" value="NAD(P)-binding Rossmann-like Domain"/>
    <property type="match status" value="1"/>
</dbReference>
<dbReference type="Gene3D" id="3.10.129.110">
    <property type="entry name" value="Polyketide synthase dehydratase"/>
    <property type="match status" value="1"/>
</dbReference>
<dbReference type="Gene3D" id="3.40.50.150">
    <property type="entry name" value="Vaccinia Virus protein VP39"/>
    <property type="match status" value="1"/>
</dbReference>
<dbReference type="InterPro" id="IPR001227">
    <property type="entry name" value="Ac_transferase_dom_sf"/>
</dbReference>
<dbReference type="InterPro" id="IPR036736">
    <property type="entry name" value="ACP-like_sf"/>
</dbReference>
<dbReference type="InterPro" id="IPR014043">
    <property type="entry name" value="Acyl_transferase_dom"/>
</dbReference>
<dbReference type="InterPro" id="IPR016035">
    <property type="entry name" value="Acyl_Trfase/lysoPLipase"/>
</dbReference>
<dbReference type="InterPro" id="IPR013120">
    <property type="entry name" value="Far_NAD-bd"/>
</dbReference>
<dbReference type="InterPro" id="IPR014031">
    <property type="entry name" value="Ketoacyl_synth_C"/>
</dbReference>
<dbReference type="InterPro" id="IPR014030">
    <property type="entry name" value="Ketoacyl_synth_N"/>
</dbReference>
<dbReference type="InterPro" id="IPR016036">
    <property type="entry name" value="Malonyl_transacylase_ACP-bd"/>
</dbReference>
<dbReference type="InterPro" id="IPR013217">
    <property type="entry name" value="Methyltransf_12"/>
</dbReference>
<dbReference type="InterPro" id="IPR036291">
    <property type="entry name" value="NAD(P)-bd_dom_sf"/>
</dbReference>
<dbReference type="InterPro" id="IPR020841">
    <property type="entry name" value="PKS_Beta-ketoAc_synthase_dom"/>
</dbReference>
<dbReference type="InterPro" id="IPR042104">
    <property type="entry name" value="PKS_dehydratase_sf"/>
</dbReference>
<dbReference type="InterPro" id="IPR049900">
    <property type="entry name" value="PKS_mFAS_DH"/>
</dbReference>
<dbReference type="InterPro" id="IPR020806">
    <property type="entry name" value="PKS_PP-bd"/>
</dbReference>
<dbReference type="InterPro" id="IPR050444">
    <property type="entry name" value="Polyketide_Synthase"/>
</dbReference>
<dbReference type="InterPro" id="IPR009081">
    <property type="entry name" value="PP-bd_ACP"/>
</dbReference>
<dbReference type="InterPro" id="IPR006162">
    <property type="entry name" value="Ppantetheine_attach_site"/>
</dbReference>
<dbReference type="InterPro" id="IPR029063">
    <property type="entry name" value="SAM-dependent_MTases_sf"/>
</dbReference>
<dbReference type="InterPro" id="IPR032088">
    <property type="entry name" value="SAT"/>
</dbReference>
<dbReference type="InterPro" id="IPR016039">
    <property type="entry name" value="Thiolase-like"/>
</dbReference>
<dbReference type="PANTHER" id="PTHR45681:SF6">
    <property type="entry name" value="POLYKETIDE SYNTHASE 37"/>
    <property type="match status" value="1"/>
</dbReference>
<dbReference type="PANTHER" id="PTHR45681">
    <property type="entry name" value="POLYKETIDE SYNTHASE 44-RELATED"/>
    <property type="match status" value="1"/>
</dbReference>
<dbReference type="Pfam" id="PF00698">
    <property type="entry name" value="Acyl_transf_1"/>
    <property type="match status" value="1"/>
</dbReference>
<dbReference type="Pfam" id="PF18558">
    <property type="entry name" value="HTH_51"/>
    <property type="match status" value="1"/>
</dbReference>
<dbReference type="Pfam" id="PF00109">
    <property type="entry name" value="ketoacyl-synt"/>
    <property type="match status" value="1"/>
</dbReference>
<dbReference type="Pfam" id="PF02801">
    <property type="entry name" value="Ketoacyl-synt_C"/>
    <property type="match status" value="1"/>
</dbReference>
<dbReference type="Pfam" id="PF08242">
    <property type="entry name" value="Methyltransf_12"/>
    <property type="match status" value="1"/>
</dbReference>
<dbReference type="Pfam" id="PF07993">
    <property type="entry name" value="NAD_binding_4"/>
    <property type="match status" value="1"/>
</dbReference>
<dbReference type="Pfam" id="PF00550">
    <property type="entry name" value="PP-binding"/>
    <property type="match status" value="1"/>
</dbReference>
<dbReference type="Pfam" id="PF16073">
    <property type="entry name" value="SAT"/>
    <property type="match status" value="1"/>
</dbReference>
<dbReference type="SMART" id="SM00827">
    <property type="entry name" value="PKS_AT"/>
    <property type="match status" value="1"/>
</dbReference>
<dbReference type="SMART" id="SM00825">
    <property type="entry name" value="PKS_KS"/>
    <property type="match status" value="1"/>
</dbReference>
<dbReference type="SMART" id="SM00823">
    <property type="entry name" value="PKS_PP"/>
    <property type="match status" value="1"/>
</dbReference>
<dbReference type="SMART" id="SM01294">
    <property type="entry name" value="PKS_PP_betabranch"/>
    <property type="match status" value="1"/>
</dbReference>
<dbReference type="SUPFAM" id="SSF47336">
    <property type="entry name" value="ACP-like"/>
    <property type="match status" value="1"/>
</dbReference>
<dbReference type="SUPFAM" id="SSF52151">
    <property type="entry name" value="FabD/lysophospholipase-like"/>
    <property type="match status" value="1"/>
</dbReference>
<dbReference type="SUPFAM" id="SSF51735">
    <property type="entry name" value="NAD(P)-binding Rossmann-fold domains"/>
    <property type="match status" value="1"/>
</dbReference>
<dbReference type="SUPFAM" id="SSF55048">
    <property type="entry name" value="Probable ACP-binding domain of malonyl-CoA ACP transacylase"/>
    <property type="match status" value="1"/>
</dbReference>
<dbReference type="SUPFAM" id="SSF53335">
    <property type="entry name" value="S-adenosyl-L-methionine-dependent methyltransferases"/>
    <property type="match status" value="1"/>
</dbReference>
<dbReference type="SUPFAM" id="SSF53901">
    <property type="entry name" value="Thiolase-like"/>
    <property type="match status" value="1"/>
</dbReference>
<dbReference type="PROSITE" id="PS50075">
    <property type="entry name" value="CARRIER"/>
    <property type="match status" value="1"/>
</dbReference>
<dbReference type="PROSITE" id="PS52004">
    <property type="entry name" value="KS3_2"/>
    <property type="match status" value="1"/>
</dbReference>
<dbReference type="PROSITE" id="PS00012">
    <property type="entry name" value="PHOSPHOPANTETHEINE"/>
    <property type="match status" value="1"/>
</dbReference>
<dbReference type="PROSITE" id="PS52019">
    <property type="entry name" value="PKS_MFAS_DH"/>
    <property type="match status" value="1"/>
</dbReference>
<name>AZAA_ASPNA</name>
<reference key="1">
    <citation type="journal article" date="2011" name="Genome Res.">
        <title>Comparative genomics of citric-acid-producing Aspergillus niger ATCC 1015 versus enzyme-producing CBS 513.88.</title>
        <authorList>
            <person name="Andersen M.R."/>
            <person name="Salazar M.P."/>
            <person name="Schaap P.J."/>
            <person name="van de Vondervoort P.J.I."/>
            <person name="Culley D."/>
            <person name="Thykaer J."/>
            <person name="Frisvad J.C."/>
            <person name="Nielsen K.F."/>
            <person name="Albang R."/>
            <person name="Albermann K."/>
            <person name="Berka R.M."/>
            <person name="Braus G.H."/>
            <person name="Braus-Stromeyer S.A."/>
            <person name="Corrochano L.M."/>
            <person name="Dai Z."/>
            <person name="van Dijck P.W.M."/>
            <person name="Hofmann G."/>
            <person name="Lasure L.L."/>
            <person name="Magnuson J.K."/>
            <person name="Menke H."/>
            <person name="Meijer M."/>
            <person name="Meijer S.L."/>
            <person name="Nielsen J.B."/>
            <person name="Nielsen M.L."/>
            <person name="van Ooyen A.J.J."/>
            <person name="Pel H.J."/>
            <person name="Poulsen L."/>
            <person name="Samson R.A."/>
            <person name="Stam H."/>
            <person name="Tsang A."/>
            <person name="van den Brink J.M."/>
            <person name="Atkins A."/>
            <person name="Aerts A."/>
            <person name="Shapiro H."/>
            <person name="Pangilinan J."/>
            <person name="Salamov A."/>
            <person name="Lou Y."/>
            <person name="Lindquist E."/>
            <person name="Lucas S."/>
            <person name="Grimwood J."/>
            <person name="Grigoriev I.V."/>
            <person name="Kubicek C.P."/>
            <person name="Martinez D."/>
            <person name="van Peij N.N.M.E."/>
            <person name="Roubos J.A."/>
            <person name="Nielsen J."/>
            <person name="Baker S.E."/>
        </authorList>
    </citation>
    <scope>NUCLEOTIDE SEQUENCE [LARGE SCALE GENOMIC DNA]</scope>
    <source>
        <strain>ATCC 1015 / CBS 113.46 / FGSC A1144 / LSHB Ac4 / NCTC 3858a / NRRL 328 / USDA 3528.7</strain>
    </source>
</reference>
<reference key="2">
    <citation type="journal article" date="2012" name="Chem. Biol.">
        <title>Characterization of a silent azaphilone gene cluster from Aspergillus niger ATCC 1015 reveals a hydroxylation-mediated pyran-ring formation.</title>
        <authorList>
            <person name="Zabala A.O."/>
            <person name="Xu W."/>
            <person name="Chooi Y.H."/>
            <person name="Tang Y."/>
        </authorList>
    </citation>
    <scope>FUNCTION</scope>
    <scope>CATALYTIC ACTIVITY</scope>
    <scope>INDUCTION</scope>
</reference>
<sequence>MVTTTRATNPTNTLLLFGPQALSFSTATFADIHARVVQTSENAWIKQTITSLPGLWDALVKEFPQYGALEGKQLLRDLDRWFETGTMEHAEPHLPNILLSPMVVITQLTEYVDYLKTMPHAADQQTETVGFCTGLLTALAASLAPDIKGIRQYGAIAIKLAMIIGGVVDVQDITSPNGPSKSLAVAWDSAETQDRLNQIIDQSPEAYISVEYDHNRATITTAARSISSLQQRLRNAGLIASQIGLRGRFHCACYEKDIEALSKFCDSVPSLCLPDAAVLALPTRSNDAGSFILSGKLHHCALRSILLDTSHWYQTLEVVRQSFLKSPSSMVVSFGPERCIPPSILKGLSSIVTTAAEYQPSYLHRDPELCNPNEIAVIGMSCKVAGADDVDEFWDLLCKAESQHQEVPKERFGFESAFREVDPTRKWYGNFINEHDCFDHKFFKKSAREIAATDPQQRQMLQVAYQAVEQSGYFTTPKSDKDRKIGCYIGVCAADYEYNVACHPPNAFMATGNLKSFVAGKISHWFGWTGPGLCIDTACSSSLVAVHQACQAILTGDCTAALAGGANIITHPLWYQNLAAASFLSPTGQCKPFDASADGYCRGEGFAAVFLKKMSAAIADGDMIIGSIKATAVNQNQNCTPVFVPNAPTLSDLFRDVLDRSQLTANQITVVEAHGTGTQVGDPAEYESIRNVLGGPSRSTPLLFGSVKGLVGHTECTSGAVSLVKTLLMQQHEAIPPQPSFDRLNPEIPVSESDNMQIATRFSPWTAEYRAALINNYGACGSNASMVVAQAPRTEQKRSATRRTSVVLDYPFRLCGSDDRALRAYSERLVRFIASGIKDGISVADLAFNVCRQSNPTLDRSLAFACRTTQEVEEKLRAFVAGNQGLISASRSKTPREVILCFGGQISNYVGLDREVYDNVALLRKHLAICDAACRDLGVDSIFPGIFQKSPISDPVKLQTILFSTQYSSAKAWMDSGVRPVAAVGHSFGELTALCVTGILSLADAMKMIVGRATVIRDFWGEDKGSMIAVEADENRVQRLLAEAAKQCELIHVRAPTIACVNGPTSYTLAGPVKSIDIVTEVISRLSDSGPSIRSKRLKVTNAFHSTLVEPLMEELEKVGQQLTFNAPTIQLERAIEHHSDATLTSDYVPDHMRNPVYFNQAVQRLAQQYPDSVWLEAGSNSTITSMASRALGSPKSLHFQAVNITSDDSWSMLITSTLSLWKQGISTNFWAYHAKQTYEYNPVLLPPYQFEPSRHWMELKVPSFMSNGNVQCGPRDEEEPPKTLWSLIEASDKVARFQINTAAPKYVELVSGHVIANTAPICPATVEVDIVVEALRSLRPDFMDSNLQPQVLAVTNQSPICIDPNRSVWLECQAMDSNLVWEWRIVSDSLQEPGTSSSAHVLGKLAFLSGQDEVKQQESEFMRLERLIGHQRCVDLLNTTEADDIIQGRNIYTTFAGVVDYGEQYRGLKKIVGKGLESAGRVQKKPSEESWLDAHLGDCFSQVGGIWVNCMTDHNPDEMFIATGFEKWVRSPALRHGQPRPEIWDVLACHHRSSEQTYLTDIFIFDAEQGALTEVILGINYHKVAKASMSKILSRLSGTEAAPSSSTRAHPTSSSSPRLPGPFVPEDKSQNETQTAGTNAVAKKKSEKSAQQNVLDKTRALLAEISGLEPSEIEAETGLADIGIDSLMGMELARDLEALFKCPLLGDELANVTTFQGLVEYVQSAVGVPANGDEPDNTNADEVFEEDNLAASPSSSSSSTNLTEDSSLDPTETTTNISSYPELSPAWVLEAFEESKQLTDHFIEQYRCANYVDTILPKQTQLCVALTVEAFEKLGCPIRSAVAGQKLERILHIPKHAQLAQYLYRLLSADARLINLTEDGRITRTHMALPKPSDQILQDLLRLYPDHEWANRLAAFTGARLAEVLKGETDGLGLIFGTDEGRELVAGLYGDSLLNKLSYRQMEDIITRLASRIPRDSGPLKILEMGAGTGGTTRGMAPLLARLGIPVEYTFTDLSGSFVAAARKKYQKEYPFMKFQVHDIEKPPSDQLRHSQHIVIASNAIHATHSLTDSSRHVREFLKTDGFLMIVEMTQPVHWVDIIFGLFDGWWLFADGRDHAIASAGWWEKVFQSVGYGQVDWTDGHRPEVQIQRVIIALASGPRYGRQPLPPAPPPNLVPGSHASRQAAVNEYLDKYTKGFTLPAQTSNTDISNSTSYWEKQCVLITGATGSLGVHLVAAVAALDDVQTVICLNRRSPMDPDLRQQQAFERRGILLEAASMSKIRVLQTDSSKPQLGLTDEVYSSLVTSTTHIIHNAWPMTGKRPLSGLEQQFLVMRNLLDLAAQCSSTRPANAPRIVFQFISSIATVGYYPLWSGQTLVPEARMGIESVLANGYGEAKYVCEQMLDRTLHQYPDRFRAMAVRLGQIAGSRTSGYWNPMEHLSFLFKSAQTLQVFPDFTGDLCWTPVNDVAATLSDLLLRSTHSNSTTDQPIYHIDNPVRQSWSEMVPVLIDALGIPAQNVIPFADWVCRVRAFPGQVEWDNPSALLIDFLDDHFLRMSCGGLLLDTKRACEHSPTLAAVGPVTAELARKYIQSWKEMGFLNP</sequence>
<feature type="chain" id="PRO_0000437588" description="Non-reducing polyketide synthase azaA">
    <location>
        <begin position="1"/>
        <end position="2599"/>
    </location>
</feature>
<feature type="domain" description="Ketosynthase family 3 (KS3)" evidence="4">
    <location>
        <begin position="372"/>
        <end position="790"/>
    </location>
</feature>
<feature type="domain" description="PKS/mFAS DH" evidence="5">
    <location>
        <begin position="1282"/>
        <end position="1591"/>
    </location>
</feature>
<feature type="domain" description="Carrier" evidence="3">
    <location>
        <begin position="1653"/>
        <end position="1727"/>
    </location>
</feature>
<feature type="region of interest" description="N-terminal acylcarrier protein transacylase domain (SAT)" evidence="1">
    <location>
        <begin position="95"/>
        <end position="231"/>
    </location>
</feature>
<feature type="region of interest" description="Malonyl-CoA:ACP transacylase (MAT) domain" evidence="2">
    <location>
        <begin position="902"/>
        <end position="1193"/>
    </location>
</feature>
<feature type="region of interest" description="N-terminal hotdog fold" evidence="5">
    <location>
        <begin position="1282"/>
        <end position="1413"/>
    </location>
</feature>
<feature type="region of interest" description="Product template (PT) domain" evidence="2">
    <location>
        <begin position="1310"/>
        <end position="1589"/>
    </location>
</feature>
<feature type="region of interest" description="C-terminal hotdog fold" evidence="5">
    <location>
        <begin position="1443"/>
        <end position="1591"/>
    </location>
</feature>
<feature type="region of interest" description="Disordered" evidence="6">
    <location>
        <begin position="1601"/>
        <end position="1652"/>
    </location>
</feature>
<feature type="region of interest" description="Disordered" evidence="6">
    <location>
        <begin position="1749"/>
        <end position="1779"/>
    </location>
</feature>
<feature type="region of interest" description="Methyltransferase domain" evidence="2">
    <location>
        <begin position="1952"/>
        <end position="2140"/>
    </location>
</feature>
<feature type="region of interest" description="NADPH-binding (R) domain" evidence="2">
    <location>
        <begin position="2222"/>
        <end position="2467"/>
    </location>
</feature>
<feature type="compositionally biased region" description="Low complexity" evidence="6">
    <location>
        <begin position="1602"/>
        <end position="1619"/>
    </location>
</feature>
<feature type="compositionally biased region" description="Low complexity" evidence="6">
    <location>
        <begin position="1750"/>
        <end position="1766"/>
    </location>
</feature>
<feature type="compositionally biased region" description="Polar residues" evidence="6">
    <location>
        <begin position="1769"/>
        <end position="1779"/>
    </location>
</feature>
<feature type="active site" description="Nucleophile; for transacylase activity" evidence="1">
    <location>
        <position position="132"/>
    </location>
</feature>
<feature type="active site" description="Proton donor/acceptor; for transacylase activity" evidence="1">
    <location>
        <position position="250"/>
    </location>
</feature>
<feature type="active site" description="For beta-ketoacyl synthase activity" evidence="4">
    <location>
        <position position="539"/>
    </location>
</feature>
<feature type="active site" description="For beta-ketoacyl synthase activity" evidence="4">
    <location>
        <position position="674"/>
    </location>
</feature>
<feature type="active site" description="For beta-ketoacyl synthase activity" evidence="4">
    <location>
        <position position="713"/>
    </location>
</feature>
<feature type="active site" description="Proton acceptor; for dehydratase activity" evidence="5">
    <location>
        <position position="1314"/>
    </location>
</feature>
<feature type="active site" description="Proton donor; for dehydratase activity" evidence="5">
    <location>
        <position position="1499"/>
    </location>
</feature>
<feature type="modified residue" description="O-(pantetheine 4'-phosphoryl)serine" evidence="3">
    <location>
        <position position="1687"/>
    </location>
</feature>
<gene>
    <name evidence="8" type="primary">azaA</name>
    <name type="ORF">ASPNIDRAFT_56946</name>
</gene>
<protein>
    <recommendedName>
        <fullName evidence="8">Non-reducing polyketide synthase azaA</fullName>
        <shortName evidence="8">NR-PKS azaA</shortName>
        <ecNumber evidence="7">2.3.1.-</ecNumber>
    </recommendedName>
    <alternativeName>
        <fullName evidence="8">Azaphilone biosynthesis cluster protein azaA</fullName>
    </alternativeName>
</protein>
<accession>G3XMC4</accession>
<organism>
    <name type="scientific">Aspergillus niger (strain ATCC 1015 / CBS 113.46 / FGSC A1144 / LSHB Ac4 / NCTC 3858a / NRRL 328 / USDA 3528.7)</name>
    <dbReference type="NCBI Taxonomy" id="380704"/>
    <lineage>
        <taxon>Eukaryota</taxon>
        <taxon>Fungi</taxon>
        <taxon>Dikarya</taxon>
        <taxon>Ascomycota</taxon>
        <taxon>Pezizomycotina</taxon>
        <taxon>Eurotiomycetes</taxon>
        <taxon>Eurotiomycetidae</taxon>
        <taxon>Eurotiales</taxon>
        <taxon>Aspergillaceae</taxon>
        <taxon>Aspergillus</taxon>
        <taxon>Aspergillus subgen. Circumdati</taxon>
    </lineage>
</organism>
<proteinExistence type="evidence at protein level"/>
<comment type="function">
    <text evidence="7">Non-reducing polyketide synthase; part of the gene cluster that mediates the biosynthesis of azaphilones, a class of fungal metabolites characterized by a highly oxygenated pyrano-quinone bicyclic core and exhibiting a broad range of bioactivities (PubMed:22921072). In the first step, the non-reducing polyketide synthase azaA forms the hexaketide precursor from successive condensations of five malonyl-CoA units, presumably with a simple acetyl-CoA starter unit (PubMed:22921072). The reactive polyketide chain then undergoes a PT-mediated C2-C7 cyclization to afford the aromatic ring and is eventually released as an aldehyde through the R-domain (PubMed:22921072). The putative ketoreductase azaE is proposed to catalyze the reduction of the terminal ketone resulting in the early culture product FK17-P2a (PubMed:22921072). The monooxygenase azaH was demonstrated to be the only enzyme required to convert FK17-P2a to azanigerone E (PubMed:22921072). AzaH first hydroxylates the benzaldehyde intermediate FK17-P2a at C4, which triggers the formation of the pyran-ring to afford azanigerone E (PubMed:22921072). In parallel, the 2,4-dimethylhexanoyl chain is synthesized by the HR-PKS azaB and is proposed to be transferred to the C4-hydroxyl of azanigerone E by the acyltransferase azaD directly from the ACP domain of azaB (PubMed:22921072). Alternatively, the 2,4-dimethyl-hexanoyl chain may be offloaded from the HR-PKS as a carboxylic acid and converted to an acyl-CoA by azaF (PubMed:22921072). The resulting acyl-CoA molecule could then be taken up as a substrate by AzaD to form azanigerone B (PubMed:22921072). To yield the carboxylic acid substituent in azanigerone A, the hydroxypropyl side chain of azanigerone B would need to undergo a C-C oxidative cleavage catalyzed by cytochrome P450 AzaI (PubMed:22921072). AzaI is proposed to act on a vicinal diol that leads to a C-C bond scission either through an alkoxyradical intermediate or a peroxy complex (PubMed:22921072). In the biosynthesis of azanigerone A, azanigerone B first undergoes hydroxylation at C10, possibly catalyzed by one of the two FAD-dependent monooxygenases encoded in the cluster, azaG or azaL, resulting in the vicinal diol azanigerone C (PubMed:22921072). Oxidative cleavage of azanigerone C by azaI would yield the corresponding aldehyde derivative of azanigerone A (PubMed:22921072). Finally, the dehydrogenase azaJ is proposed to convert the aldehyde functional group into the carboxylic acid, completing the conversion from azanigerone B to azanigerone A (PubMed:22921072). Alternatively, the oxidation of aldehyde to carboxylic acid may be catalyzed by the same P450 enzyme azaI via consecutive oxidation or by endogenous alcohol dehydrogenase (PubMed:22921072).</text>
</comment>
<comment type="cofactor">
    <cofactor evidence="2">
        <name>pantetheine 4'-phosphate</name>
        <dbReference type="ChEBI" id="CHEBI:47942"/>
    </cofactor>
    <text evidence="2">Binds 1 phosphopantetheine covalently.</text>
</comment>
<comment type="pathway">
    <text evidence="7">Secondary metabolite biosynthesis.</text>
</comment>
<comment type="induction">
    <text evidence="7">Expression is under the control of the azaphilone cluster-specific transcription factor azaR (PubMed:22921072).</text>
</comment>
<comment type="domain">
    <text evidence="9">Multidomain protein; including an N-terminal starter unit:ACP transacylase (SAT) domain, a beta-ketoacyl synthase (KS) domain, a malonyl-CoA:ACP transacylase (MAT) domain, a product template domain, a acyl carrier protein (ACP) domain, a methyltransferase domain and a reductive NADPH-binding domain that is required for NADPH-dependent product release.</text>
</comment>